<proteinExistence type="inferred from homology"/>
<organism>
    <name type="scientific">Streptococcus suis (strain 05ZYH33)</name>
    <dbReference type="NCBI Taxonomy" id="391295"/>
    <lineage>
        <taxon>Bacteria</taxon>
        <taxon>Bacillati</taxon>
        <taxon>Bacillota</taxon>
        <taxon>Bacilli</taxon>
        <taxon>Lactobacillales</taxon>
        <taxon>Streptococcaceae</taxon>
        <taxon>Streptococcus</taxon>
    </lineage>
</organism>
<keyword id="KW-1003">Cell membrane</keyword>
<keyword id="KW-0472">Membrane</keyword>
<keyword id="KW-0808">Transferase</keyword>
<keyword id="KW-0812">Transmembrane</keyword>
<keyword id="KW-1133">Transmembrane helix</keyword>
<reference key="1">
    <citation type="journal article" date="2007" name="PLoS ONE">
        <title>A glimpse of streptococcal toxic shock syndrome from comparative genomics of S. suis 2 Chinese isolates.</title>
        <authorList>
            <person name="Chen C."/>
            <person name="Tang J."/>
            <person name="Dong W."/>
            <person name="Wang C."/>
            <person name="Feng Y."/>
            <person name="Wang J."/>
            <person name="Zheng F."/>
            <person name="Pan X."/>
            <person name="Liu D."/>
            <person name="Li M."/>
            <person name="Song Y."/>
            <person name="Zhu X."/>
            <person name="Sun H."/>
            <person name="Feng T."/>
            <person name="Guo Z."/>
            <person name="Ju A."/>
            <person name="Ge J."/>
            <person name="Dong Y."/>
            <person name="Sun W."/>
            <person name="Jiang Y."/>
            <person name="Wang J."/>
            <person name="Yan J."/>
            <person name="Yang H."/>
            <person name="Wang X."/>
            <person name="Gao G.F."/>
            <person name="Yang R."/>
            <person name="Wang J."/>
            <person name="Yu J."/>
        </authorList>
    </citation>
    <scope>NUCLEOTIDE SEQUENCE [LARGE SCALE GENOMIC DNA]</scope>
    <source>
        <strain>05ZYH33</strain>
    </source>
</reference>
<accession>A4VWT2</accession>
<evidence type="ECO:0000255" key="1">
    <source>
        <dbReference type="HAMAP-Rule" id="MF_01147"/>
    </source>
</evidence>
<gene>
    <name evidence="1" type="primary">lgt</name>
    <name type="ordered locus">SSU05_1605</name>
</gene>
<protein>
    <recommendedName>
        <fullName evidence="1">Phosphatidylglycerol--prolipoprotein diacylglyceryl transferase</fullName>
        <ecNumber evidence="1">2.5.1.145</ecNumber>
    </recommendedName>
</protein>
<sequence>MNTIEKRLNMDPIAIKLGPLEIRWYAICILLGLILGVYLATKEGPRKKIRQDDILDFILIAFPLSILGARIYYVAFSWSEYKDNILSIFAIWNGGIAIYGGLITGAIVLYFFTQYRFINTLDFLDIVAPSVMIAQAIGRWGNFFNQEAYGKAVESLNYLPAFIRDQMYIDGAYRQPTFLFESLWNLLGFGLVCVLRRRPKFLKQGEITAFYLVWYGCGRLLIEGLRTDSLMFLGIRVSQWLSGVLILVGIIMVVLRRRKSSIPFYQP</sequence>
<dbReference type="EC" id="2.5.1.145" evidence="1"/>
<dbReference type="EMBL" id="CP000407">
    <property type="protein sequence ID" value="ABP90571.1"/>
    <property type="molecule type" value="Genomic_DNA"/>
</dbReference>
<dbReference type="SMR" id="A4VWT2"/>
<dbReference type="STRING" id="391295.SSU05_1605"/>
<dbReference type="KEGG" id="ssu:SSU05_1605"/>
<dbReference type="eggNOG" id="COG0682">
    <property type="taxonomic scope" value="Bacteria"/>
</dbReference>
<dbReference type="HOGENOM" id="CLU_013386_0_1_9"/>
<dbReference type="UniPathway" id="UPA00664"/>
<dbReference type="PHI-base" id="PHI:12109"/>
<dbReference type="GO" id="GO:0005886">
    <property type="term" value="C:plasma membrane"/>
    <property type="evidence" value="ECO:0007669"/>
    <property type="project" value="UniProtKB-SubCell"/>
</dbReference>
<dbReference type="GO" id="GO:0008961">
    <property type="term" value="F:phosphatidylglycerol-prolipoprotein diacylglyceryl transferase activity"/>
    <property type="evidence" value="ECO:0007669"/>
    <property type="project" value="UniProtKB-UniRule"/>
</dbReference>
<dbReference type="GO" id="GO:0042158">
    <property type="term" value="P:lipoprotein biosynthetic process"/>
    <property type="evidence" value="ECO:0007669"/>
    <property type="project" value="UniProtKB-UniRule"/>
</dbReference>
<dbReference type="HAMAP" id="MF_01147">
    <property type="entry name" value="Lgt"/>
    <property type="match status" value="1"/>
</dbReference>
<dbReference type="InterPro" id="IPR001640">
    <property type="entry name" value="Lgt"/>
</dbReference>
<dbReference type="NCBIfam" id="TIGR00544">
    <property type="entry name" value="lgt"/>
    <property type="match status" value="1"/>
</dbReference>
<dbReference type="PANTHER" id="PTHR30589:SF0">
    <property type="entry name" value="PHOSPHATIDYLGLYCEROL--PROLIPOPROTEIN DIACYLGLYCERYL TRANSFERASE"/>
    <property type="match status" value="1"/>
</dbReference>
<dbReference type="PANTHER" id="PTHR30589">
    <property type="entry name" value="PROLIPOPROTEIN DIACYLGLYCERYL TRANSFERASE"/>
    <property type="match status" value="1"/>
</dbReference>
<dbReference type="Pfam" id="PF01790">
    <property type="entry name" value="LGT"/>
    <property type="match status" value="1"/>
</dbReference>
<dbReference type="PROSITE" id="PS01311">
    <property type="entry name" value="LGT"/>
    <property type="match status" value="1"/>
</dbReference>
<comment type="function">
    <text evidence="1">Catalyzes the transfer of the diacylglyceryl group from phosphatidylglycerol to the sulfhydryl group of the N-terminal cysteine of a prolipoprotein, the first step in the formation of mature lipoproteins.</text>
</comment>
<comment type="catalytic activity">
    <reaction evidence="1">
        <text>L-cysteinyl-[prolipoprotein] + a 1,2-diacyl-sn-glycero-3-phospho-(1'-sn-glycerol) = an S-1,2-diacyl-sn-glyceryl-L-cysteinyl-[prolipoprotein] + sn-glycerol 1-phosphate + H(+)</text>
        <dbReference type="Rhea" id="RHEA:56712"/>
        <dbReference type="Rhea" id="RHEA-COMP:14679"/>
        <dbReference type="Rhea" id="RHEA-COMP:14680"/>
        <dbReference type="ChEBI" id="CHEBI:15378"/>
        <dbReference type="ChEBI" id="CHEBI:29950"/>
        <dbReference type="ChEBI" id="CHEBI:57685"/>
        <dbReference type="ChEBI" id="CHEBI:64716"/>
        <dbReference type="ChEBI" id="CHEBI:140658"/>
        <dbReference type="EC" id="2.5.1.145"/>
    </reaction>
</comment>
<comment type="pathway">
    <text evidence="1">Protein modification; lipoprotein biosynthesis (diacylglyceryl transfer).</text>
</comment>
<comment type="subcellular location">
    <subcellularLocation>
        <location evidence="1">Cell membrane</location>
        <topology evidence="1">Multi-pass membrane protein</topology>
    </subcellularLocation>
</comment>
<comment type="similarity">
    <text evidence="1">Belongs to the Lgt family.</text>
</comment>
<name>LGT_STRSY</name>
<feature type="chain" id="PRO_1000065485" description="Phosphatidylglycerol--prolipoprotein diacylglyceryl transferase">
    <location>
        <begin position="1"/>
        <end position="267"/>
    </location>
</feature>
<feature type="transmembrane region" description="Helical" evidence="1">
    <location>
        <begin position="20"/>
        <end position="40"/>
    </location>
</feature>
<feature type="transmembrane region" description="Helical" evidence="1">
    <location>
        <begin position="57"/>
        <end position="77"/>
    </location>
</feature>
<feature type="transmembrane region" description="Helical" evidence="1">
    <location>
        <begin position="88"/>
        <end position="108"/>
    </location>
</feature>
<feature type="transmembrane region" description="Helical" evidence="1">
    <location>
        <begin position="117"/>
        <end position="137"/>
    </location>
</feature>
<feature type="transmembrane region" description="Helical" evidence="1">
    <location>
        <begin position="175"/>
        <end position="195"/>
    </location>
</feature>
<feature type="transmembrane region" description="Helical" evidence="1">
    <location>
        <begin position="205"/>
        <end position="225"/>
    </location>
</feature>
<feature type="transmembrane region" description="Helical" evidence="1">
    <location>
        <begin position="235"/>
        <end position="255"/>
    </location>
</feature>
<feature type="binding site" evidence="1">
    <location>
        <position position="139"/>
    </location>
    <ligand>
        <name>a 1,2-diacyl-sn-glycero-3-phospho-(1'-sn-glycerol)</name>
        <dbReference type="ChEBI" id="CHEBI:64716"/>
    </ligand>
</feature>